<accession>Q6ZNK6</accession>
<accession>Q5H8A9</accession>
<name>TIFAB_HUMAN</name>
<proteinExistence type="evidence at protein level"/>
<feature type="chain" id="PRO_0000320692" description="TRAF-interacting protein with FHA domain-containing protein B">
    <location>
        <begin position="1"/>
        <end position="161"/>
    </location>
</feature>
<feature type="domain" description="FHA" evidence="1">
    <location>
        <begin position="36"/>
        <end position="91"/>
    </location>
</feature>
<gene>
    <name evidence="3" type="primary">TIFAB</name>
</gene>
<keyword id="KW-1267">Proteomics identification</keyword>
<keyword id="KW-1185">Reference proteome</keyword>
<protein>
    <recommendedName>
        <fullName>TRAF-interacting protein with FHA domain-containing protein B</fullName>
    </recommendedName>
    <alternativeName>
        <fullName>TIFA-like protein</fullName>
    </alternativeName>
</protein>
<reference evidence="5" key="1">
    <citation type="journal article" date="2004" name="Nat. Genet.">
        <title>Complete sequencing and characterization of 21,243 full-length human cDNAs.</title>
        <authorList>
            <person name="Ota T."/>
            <person name="Suzuki Y."/>
            <person name="Nishikawa T."/>
            <person name="Otsuki T."/>
            <person name="Sugiyama T."/>
            <person name="Irie R."/>
            <person name="Wakamatsu A."/>
            <person name="Hayashi K."/>
            <person name="Sato H."/>
            <person name="Nagai K."/>
            <person name="Kimura K."/>
            <person name="Makita H."/>
            <person name="Sekine M."/>
            <person name="Obayashi M."/>
            <person name="Nishi T."/>
            <person name="Shibahara T."/>
            <person name="Tanaka T."/>
            <person name="Ishii S."/>
            <person name="Yamamoto J."/>
            <person name="Saito K."/>
            <person name="Kawai Y."/>
            <person name="Isono Y."/>
            <person name="Nakamura Y."/>
            <person name="Nagahari K."/>
            <person name="Murakami K."/>
            <person name="Yasuda T."/>
            <person name="Iwayanagi T."/>
            <person name="Wagatsuma M."/>
            <person name="Shiratori A."/>
            <person name="Sudo H."/>
            <person name="Hosoiri T."/>
            <person name="Kaku Y."/>
            <person name="Kodaira H."/>
            <person name="Kondo H."/>
            <person name="Sugawara M."/>
            <person name="Takahashi M."/>
            <person name="Kanda K."/>
            <person name="Yokoi T."/>
            <person name="Furuya T."/>
            <person name="Kikkawa E."/>
            <person name="Omura Y."/>
            <person name="Abe K."/>
            <person name="Kamihara K."/>
            <person name="Katsuta N."/>
            <person name="Sato K."/>
            <person name="Tanikawa M."/>
            <person name="Yamazaki M."/>
            <person name="Ninomiya K."/>
            <person name="Ishibashi T."/>
            <person name="Yamashita H."/>
            <person name="Murakawa K."/>
            <person name="Fujimori K."/>
            <person name="Tanai H."/>
            <person name="Kimata M."/>
            <person name="Watanabe M."/>
            <person name="Hiraoka S."/>
            <person name="Chiba Y."/>
            <person name="Ishida S."/>
            <person name="Ono Y."/>
            <person name="Takiguchi S."/>
            <person name="Watanabe S."/>
            <person name="Yosida M."/>
            <person name="Hotuta T."/>
            <person name="Kusano J."/>
            <person name="Kanehori K."/>
            <person name="Takahashi-Fujii A."/>
            <person name="Hara H."/>
            <person name="Tanase T.-O."/>
            <person name="Nomura Y."/>
            <person name="Togiya S."/>
            <person name="Komai F."/>
            <person name="Hara R."/>
            <person name="Takeuchi K."/>
            <person name="Arita M."/>
            <person name="Imose N."/>
            <person name="Musashino K."/>
            <person name="Yuuki H."/>
            <person name="Oshima A."/>
            <person name="Sasaki N."/>
            <person name="Aotsuka S."/>
            <person name="Yoshikawa Y."/>
            <person name="Matsunawa H."/>
            <person name="Ichihara T."/>
            <person name="Shiohata N."/>
            <person name="Sano S."/>
            <person name="Moriya S."/>
            <person name="Momiyama H."/>
            <person name="Satoh N."/>
            <person name="Takami S."/>
            <person name="Terashima Y."/>
            <person name="Suzuki O."/>
            <person name="Nakagawa S."/>
            <person name="Senoh A."/>
            <person name="Mizoguchi H."/>
            <person name="Goto Y."/>
            <person name="Shimizu F."/>
            <person name="Wakebe H."/>
            <person name="Hishigaki H."/>
            <person name="Watanabe T."/>
            <person name="Sugiyama A."/>
            <person name="Takemoto M."/>
            <person name="Kawakami B."/>
            <person name="Yamazaki M."/>
            <person name="Watanabe K."/>
            <person name="Kumagai A."/>
            <person name="Itakura S."/>
            <person name="Fukuzumi Y."/>
            <person name="Fujimori Y."/>
            <person name="Komiyama M."/>
            <person name="Tashiro H."/>
            <person name="Tanigami A."/>
            <person name="Fujiwara T."/>
            <person name="Ono T."/>
            <person name="Yamada K."/>
            <person name="Fujii Y."/>
            <person name="Ozaki K."/>
            <person name="Hirao M."/>
            <person name="Ohmori Y."/>
            <person name="Kawabata A."/>
            <person name="Hikiji T."/>
            <person name="Kobatake N."/>
            <person name="Inagaki H."/>
            <person name="Ikema Y."/>
            <person name="Okamoto S."/>
            <person name="Okitani R."/>
            <person name="Kawakami T."/>
            <person name="Noguchi S."/>
            <person name="Itoh T."/>
            <person name="Shigeta K."/>
            <person name="Senba T."/>
            <person name="Matsumura K."/>
            <person name="Nakajima Y."/>
            <person name="Mizuno T."/>
            <person name="Morinaga M."/>
            <person name="Sasaki M."/>
            <person name="Togashi T."/>
            <person name="Oyama M."/>
            <person name="Hata H."/>
            <person name="Watanabe M."/>
            <person name="Komatsu T."/>
            <person name="Mizushima-Sugano J."/>
            <person name="Satoh T."/>
            <person name="Shirai Y."/>
            <person name="Takahashi Y."/>
            <person name="Nakagawa K."/>
            <person name="Okumura K."/>
            <person name="Nagase T."/>
            <person name="Nomura N."/>
            <person name="Kikuchi H."/>
            <person name="Masuho Y."/>
            <person name="Yamashita R."/>
            <person name="Nakai K."/>
            <person name="Yada T."/>
            <person name="Nakamura Y."/>
            <person name="Ohara O."/>
            <person name="Isogai T."/>
            <person name="Sugano S."/>
        </authorList>
    </citation>
    <scope>NUCLEOTIDE SEQUENCE [LARGE SCALE MRNA]</scope>
    <source>
        <tissue evidence="5">Spleen</tissue>
    </source>
</reference>
<reference evidence="4 6" key="2">
    <citation type="journal article" date="2004" name="Biochem. Biophys. Res. Commun.">
        <title>TIFAB inhibits TIFA, TRAF-interacting protein with a forkhead-associated domain.</title>
        <authorList>
            <person name="Matsumura T."/>
            <person name="Semba K."/>
            <person name="Azuma S."/>
            <person name="Ikawa S."/>
            <person name="Gohda J."/>
            <person name="Akiyama T."/>
            <person name="Inoue J."/>
        </authorList>
    </citation>
    <scope>NUCLEOTIDE SEQUENCE [MRNA] OF 1-13</scope>
    <scope>FUNCTION</scope>
    <scope>INTERACTION WITH TIFA</scope>
    <source>
        <tissue evidence="6">Spleen</tissue>
    </source>
</reference>
<organism>
    <name type="scientific">Homo sapiens</name>
    <name type="common">Human</name>
    <dbReference type="NCBI Taxonomy" id="9606"/>
    <lineage>
        <taxon>Eukaryota</taxon>
        <taxon>Metazoa</taxon>
        <taxon>Chordata</taxon>
        <taxon>Craniata</taxon>
        <taxon>Vertebrata</taxon>
        <taxon>Euteleostomi</taxon>
        <taxon>Mammalia</taxon>
        <taxon>Eutheria</taxon>
        <taxon>Euarchontoglires</taxon>
        <taxon>Primates</taxon>
        <taxon>Haplorrhini</taxon>
        <taxon>Catarrhini</taxon>
        <taxon>Hominidae</taxon>
        <taxon>Homo</taxon>
    </lineage>
</organism>
<comment type="function">
    <text evidence="2">Inhibits TIFA-mediated TRAF6 activation possibly by inducing a conformational change in TIFA.</text>
</comment>
<comment type="subunit">
    <text evidence="2">Interacts with TIFA.</text>
</comment>
<comment type="interaction">
    <interactant intactId="EBI-26453465">
        <id>Q6ZNK6</id>
    </interactant>
    <interactant intactId="EBI-740711">
        <id>Q96CG3</id>
        <label>TIFA</label>
    </interactant>
    <organismsDiffer>false</organismsDiffer>
    <experiments>3</experiments>
</comment>
<comment type="interaction">
    <interactant intactId="EBI-26453465">
        <id>Q6ZNK6</id>
    </interactant>
    <interactant intactId="EBI-1043104">
        <id>Q9Y4E8</id>
        <label>USP15</label>
    </interactant>
    <organismsDiffer>false</organismsDiffer>
    <experiments>5</experiments>
</comment>
<comment type="sequence caution" evidence="4">
    <conflict type="erroneous initiation">
        <sequence resource="EMBL-CDS" id="BAC85138"/>
    </conflict>
</comment>
<evidence type="ECO:0000255" key="1"/>
<evidence type="ECO:0000269" key="2">
    <source>
    </source>
</evidence>
<evidence type="ECO:0000303" key="3">
    <source>
    </source>
</evidence>
<evidence type="ECO:0000305" key="4"/>
<evidence type="ECO:0000312" key="5">
    <source>
        <dbReference type="EMBL" id="BAC85138.1"/>
    </source>
</evidence>
<evidence type="ECO:0000312" key="6">
    <source>
        <dbReference type="EMBL" id="BAD89018.1"/>
    </source>
</evidence>
<dbReference type="EMBL" id="AK131088">
    <property type="protein sequence ID" value="BAC85138.1"/>
    <property type="status" value="ALT_INIT"/>
    <property type="molecule type" value="mRNA"/>
</dbReference>
<dbReference type="EMBL" id="AB161513">
    <property type="protein sequence ID" value="BAD89018.1"/>
    <property type="molecule type" value="mRNA"/>
</dbReference>
<dbReference type="CCDS" id="CCDS43365.1"/>
<dbReference type="RefSeq" id="NP_001092691.1">
    <property type="nucleotide sequence ID" value="NM_001099221.2"/>
</dbReference>
<dbReference type="SMR" id="Q6ZNK6"/>
<dbReference type="ComplexPortal" id="CPX-9661">
    <property type="entry name" value="TIFA-TIFAB signalling regulator complex"/>
</dbReference>
<dbReference type="FunCoup" id="Q6ZNK6">
    <property type="interactions" value="28"/>
</dbReference>
<dbReference type="IntAct" id="Q6ZNK6">
    <property type="interactions" value="101"/>
</dbReference>
<dbReference type="STRING" id="9606.ENSP00000440509"/>
<dbReference type="BioMuta" id="TIFAB"/>
<dbReference type="DMDM" id="172046187"/>
<dbReference type="MassIVE" id="Q6ZNK6"/>
<dbReference type="PaxDb" id="9606-ENSP00000440509"/>
<dbReference type="PeptideAtlas" id="Q6ZNK6"/>
<dbReference type="ProteomicsDB" id="68031"/>
<dbReference type="Antibodypedia" id="53591">
    <property type="antibodies" value="57 antibodies from 12 providers"/>
</dbReference>
<dbReference type="DNASU" id="497189"/>
<dbReference type="Ensembl" id="ENST00000537858.2">
    <property type="protein sequence ID" value="ENSP00000440509.1"/>
    <property type="gene ID" value="ENSG00000255833.2"/>
</dbReference>
<dbReference type="GeneID" id="497189"/>
<dbReference type="KEGG" id="hsa:497189"/>
<dbReference type="MANE-Select" id="ENST00000537858.2">
    <property type="protein sequence ID" value="ENSP00000440509.1"/>
    <property type="RefSeq nucleotide sequence ID" value="NM_001099221.2"/>
    <property type="RefSeq protein sequence ID" value="NP_001092691.1"/>
</dbReference>
<dbReference type="UCSC" id="uc003law.5">
    <property type="organism name" value="human"/>
</dbReference>
<dbReference type="AGR" id="HGNC:34024"/>
<dbReference type="CTD" id="497189"/>
<dbReference type="DisGeNET" id="497189"/>
<dbReference type="GeneCards" id="TIFAB"/>
<dbReference type="HGNC" id="HGNC:34024">
    <property type="gene designation" value="TIFAB"/>
</dbReference>
<dbReference type="HPA" id="ENSG00000255833">
    <property type="expression patterns" value="Tissue enhanced (lymphoid)"/>
</dbReference>
<dbReference type="MIM" id="612663">
    <property type="type" value="gene"/>
</dbReference>
<dbReference type="neXtProt" id="NX_Q6ZNK6"/>
<dbReference type="OpenTargets" id="ENSG00000255833"/>
<dbReference type="PharmGKB" id="PA162405786"/>
<dbReference type="VEuPathDB" id="HostDB:ENSG00000255833"/>
<dbReference type="eggNOG" id="ENOG502SPI3">
    <property type="taxonomic scope" value="Eukaryota"/>
</dbReference>
<dbReference type="GeneTree" id="ENSGT00940000154589"/>
<dbReference type="HOGENOM" id="CLU_116346_0_0_1"/>
<dbReference type="InParanoid" id="Q6ZNK6"/>
<dbReference type="OMA" id="PLIYRPQ"/>
<dbReference type="OrthoDB" id="9835751at2759"/>
<dbReference type="PAN-GO" id="Q6ZNK6">
    <property type="GO annotations" value="0 GO annotations based on evolutionary models"/>
</dbReference>
<dbReference type="PhylomeDB" id="Q6ZNK6"/>
<dbReference type="TreeFam" id="TF333218"/>
<dbReference type="PathwayCommons" id="Q6ZNK6"/>
<dbReference type="SignaLink" id="Q6ZNK6"/>
<dbReference type="BioGRID-ORCS" id="497189">
    <property type="hits" value="9 hits in 1132 CRISPR screens"/>
</dbReference>
<dbReference type="GenomeRNAi" id="497189"/>
<dbReference type="Pharos" id="Q6ZNK6">
    <property type="development level" value="Tbio"/>
</dbReference>
<dbReference type="PRO" id="PR:Q6ZNK6"/>
<dbReference type="Proteomes" id="UP000005640">
    <property type="component" value="Chromosome 5"/>
</dbReference>
<dbReference type="RNAct" id="Q6ZNK6">
    <property type="molecule type" value="protein"/>
</dbReference>
<dbReference type="Bgee" id="ENSG00000255833">
    <property type="expression patterns" value="Expressed in vermiform appendix and 38 other cell types or tissues"/>
</dbReference>
<dbReference type="GO" id="GO:0022625">
    <property type="term" value="C:cytosolic large ribosomal subunit"/>
    <property type="evidence" value="ECO:0007669"/>
    <property type="project" value="Ensembl"/>
</dbReference>
<dbReference type="GO" id="GO:0035800">
    <property type="term" value="F:deubiquitinase activator activity"/>
    <property type="evidence" value="ECO:0007669"/>
    <property type="project" value="Ensembl"/>
</dbReference>
<dbReference type="GO" id="GO:0043021">
    <property type="term" value="F:ribonucleoprotein complex binding"/>
    <property type="evidence" value="ECO:0007669"/>
    <property type="project" value="Ensembl"/>
</dbReference>
<dbReference type="GO" id="GO:0031223">
    <property type="term" value="P:auditory behavior"/>
    <property type="evidence" value="ECO:0000316"/>
    <property type="project" value="CAFA"/>
</dbReference>
<dbReference type="GO" id="GO:0071320">
    <property type="term" value="P:cellular response to cAMP"/>
    <property type="evidence" value="ECO:0007669"/>
    <property type="project" value="Ensembl"/>
</dbReference>
<dbReference type="GO" id="GO:1904401">
    <property type="term" value="P:cellular response to Thyroid stimulating hormone"/>
    <property type="evidence" value="ECO:0007669"/>
    <property type="project" value="Ensembl"/>
</dbReference>
<dbReference type="GO" id="GO:0090102">
    <property type="term" value="P:cochlea development"/>
    <property type="evidence" value="ECO:0000316"/>
    <property type="project" value="CAFA"/>
</dbReference>
<dbReference type="GO" id="GO:0090103">
    <property type="term" value="P:cochlea morphogenesis"/>
    <property type="evidence" value="ECO:0000316"/>
    <property type="project" value="CAFA"/>
</dbReference>
<dbReference type="GO" id="GO:0097094">
    <property type="term" value="P:craniofacial suture morphogenesis"/>
    <property type="evidence" value="ECO:0000316"/>
    <property type="project" value="CAFA"/>
</dbReference>
<dbReference type="GO" id="GO:0048806">
    <property type="term" value="P:genitalia development"/>
    <property type="evidence" value="ECO:0000316"/>
    <property type="project" value="CAFA"/>
</dbReference>
<dbReference type="GO" id="GO:0035112">
    <property type="term" value="P:genitalia morphogenesis"/>
    <property type="evidence" value="ECO:0000316"/>
    <property type="project" value="CAFA"/>
</dbReference>
<dbReference type="GO" id="GO:1905748">
    <property type="term" value="P:hard palate morphogenesis"/>
    <property type="evidence" value="ECO:0000316"/>
    <property type="project" value="CAFA"/>
</dbReference>
<dbReference type="GO" id="GO:0002244">
    <property type="term" value="P:hematopoietic progenitor cell differentiation"/>
    <property type="evidence" value="ECO:0007669"/>
    <property type="project" value="Ensembl"/>
</dbReference>
<dbReference type="GO" id="GO:0048839">
    <property type="term" value="P:inner ear development"/>
    <property type="evidence" value="ECO:0000316"/>
    <property type="project" value="CAFA"/>
</dbReference>
<dbReference type="GO" id="GO:0042472">
    <property type="term" value="P:inner ear morphogenesis"/>
    <property type="evidence" value="ECO:0000316"/>
    <property type="project" value="CAFA"/>
</dbReference>
<dbReference type="GO" id="GO:0098583">
    <property type="term" value="P:learned vocalization behavior"/>
    <property type="evidence" value="ECO:0000316"/>
    <property type="project" value="CAFA"/>
</dbReference>
<dbReference type="GO" id="GO:0031663">
    <property type="term" value="P:lipopolysaccharide-mediated signaling pathway"/>
    <property type="evidence" value="ECO:0007669"/>
    <property type="project" value="Ensembl"/>
</dbReference>
<dbReference type="GO" id="GO:0071626">
    <property type="term" value="P:mastication"/>
    <property type="evidence" value="ECO:0000316"/>
    <property type="project" value="CAFA"/>
</dbReference>
<dbReference type="GO" id="GO:0030099">
    <property type="term" value="P:myeloid cell differentiation"/>
    <property type="evidence" value="ECO:0007669"/>
    <property type="project" value="Ensembl"/>
</dbReference>
<dbReference type="GO" id="GO:1901078">
    <property type="term" value="P:negative regulation of relaxation of muscle"/>
    <property type="evidence" value="ECO:0000316"/>
    <property type="project" value="CAFA"/>
</dbReference>
<dbReference type="GO" id="GO:1905747">
    <property type="term" value="P:negative regulation of saliva secretion"/>
    <property type="evidence" value="ECO:0000316"/>
    <property type="project" value="CAFA"/>
</dbReference>
<dbReference type="GO" id="GO:0050885">
    <property type="term" value="P:neuromuscular process controlling balance"/>
    <property type="evidence" value="ECO:0000316"/>
    <property type="project" value="CAFA"/>
</dbReference>
<dbReference type="GO" id="GO:0030432">
    <property type="term" value="P:peristalsis"/>
    <property type="evidence" value="ECO:0000316"/>
    <property type="project" value="CAFA"/>
</dbReference>
<dbReference type="GO" id="GO:0043123">
    <property type="term" value="P:positive regulation of canonical NF-kappaB signal transduction"/>
    <property type="evidence" value="ECO:0007669"/>
    <property type="project" value="InterPro"/>
</dbReference>
<dbReference type="GO" id="GO:0045727">
    <property type="term" value="P:positive regulation of translation"/>
    <property type="evidence" value="ECO:0007669"/>
    <property type="project" value="Ensembl"/>
</dbReference>
<dbReference type="GO" id="GO:1902238">
    <property type="term" value="P:regulation of intrinsic apoptotic signaling pathway in response to osmotic stress by p53 class mediator"/>
    <property type="evidence" value="ECO:0007669"/>
    <property type="project" value="Ensembl"/>
</dbReference>
<dbReference type="GO" id="GO:0048634">
    <property type="term" value="P:regulation of muscle organ development"/>
    <property type="evidence" value="ECO:0000316"/>
    <property type="project" value="CAFA"/>
</dbReference>
<dbReference type="GO" id="GO:0007356">
    <property type="term" value="P:thorax and anterior abdomen determination"/>
    <property type="evidence" value="ECO:0000316"/>
    <property type="project" value="CAFA"/>
</dbReference>
<dbReference type="GO" id="GO:0002224">
    <property type="term" value="P:toll-like receptor signaling pathway"/>
    <property type="evidence" value="ECO:0007669"/>
    <property type="project" value="Ensembl"/>
</dbReference>
<dbReference type="GO" id="GO:0021559">
    <property type="term" value="P:trigeminal nerve development"/>
    <property type="evidence" value="ECO:0000316"/>
    <property type="project" value="CAFA"/>
</dbReference>
<dbReference type="GO" id="GO:0021650">
    <property type="term" value="P:vestibulocochlear nerve formation"/>
    <property type="evidence" value="ECO:0000316"/>
    <property type="project" value="CAFA"/>
</dbReference>
<dbReference type="CDD" id="cd22715">
    <property type="entry name" value="FHA_TIFAB"/>
    <property type="match status" value="1"/>
</dbReference>
<dbReference type="FunFam" id="2.60.200.20:FF:000068">
    <property type="entry name" value="TIFA inhibitor"/>
    <property type="match status" value="1"/>
</dbReference>
<dbReference type="Gene3D" id="2.60.200.20">
    <property type="match status" value="1"/>
</dbReference>
<dbReference type="InterPro" id="IPR000253">
    <property type="entry name" value="FHA_dom"/>
</dbReference>
<dbReference type="InterPro" id="IPR008984">
    <property type="entry name" value="SMAD_FHA_dom_sf"/>
</dbReference>
<dbReference type="InterPro" id="IPR033621">
    <property type="entry name" value="TIFA"/>
</dbReference>
<dbReference type="PANTHER" id="PTHR31266">
    <property type="entry name" value="TRAF-INTERACTING PROTEIN WITH FHA DOMAIN-CONTAINING PROTEIN A FAMILY MEMBER"/>
    <property type="match status" value="1"/>
</dbReference>
<dbReference type="PANTHER" id="PTHR31266:SF3">
    <property type="entry name" value="TRAF-INTERACTING PROTEIN WITH FHA DOMAIN-CONTAINING PROTEIN B"/>
    <property type="match status" value="1"/>
</dbReference>
<dbReference type="Pfam" id="PF00498">
    <property type="entry name" value="FHA"/>
    <property type="match status" value="1"/>
</dbReference>
<dbReference type="SUPFAM" id="SSF49879">
    <property type="entry name" value="SMAD/FHA domain"/>
    <property type="match status" value="1"/>
</dbReference>
<sequence>MEKPLTVLRVSLYHPTLGPSAFANVPPRLQHDTSPLLLGRGQDAHLQLQLPRLSRRHLSLEPYLEKGSALLAFCLKALSRKGCVWVNGLTLRYLEQVPLSTVNRVSFSGIQMLVRVEEGTSLEAFVCYFHVSPSPLIYRPEAEETDEWEGISQGQPPPGSG</sequence>